<gene>
    <name type="primary">rpl22l1</name>
</gene>
<accession>Q5I0R6</accession>
<protein>
    <recommendedName>
        <fullName evidence="1">Ribosomal protein eL22-like 1</fullName>
    </recommendedName>
    <alternativeName>
        <fullName>60S ribosomal protein L22-like 1</fullName>
    </alternativeName>
    <alternativeName>
        <fullName evidence="1">Large ribosomal subunit protein eL22-like 1</fullName>
    </alternativeName>
</protein>
<sequence length="120" mass="14093">MAPSKDKKPKKAWSFTLDLTHPVEDGIFDSVNFEQFLKERIKVNGKTGNLGSIVHIGRLKSKITVSSEKKFSKRYLKYLTKKYLKKNNLRDWLRVVASDKETYELRYFQISQDDESESEE</sequence>
<proteinExistence type="evidence at transcript level"/>
<organism>
    <name type="scientific">Xenopus tropicalis</name>
    <name type="common">Western clawed frog</name>
    <name type="synonym">Silurana tropicalis</name>
    <dbReference type="NCBI Taxonomy" id="8364"/>
    <lineage>
        <taxon>Eukaryota</taxon>
        <taxon>Metazoa</taxon>
        <taxon>Chordata</taxon>
        <taxon>Craniata</taxon>
        <taxon>Vertebrata</taxon>
        <taxon>Euteleostomi</taxon>
        <taxon>Amphibia</taxon>
        <taxon>Batrachia</taxon>
        <taxon>Anura</taxon>
        <taxon>Pipoidea</taxon>
        <taxon>Pipidae</taxon>
        <taxon>Xenopodinae</taxon>
        <taxon>Xenopus</taxon>
        <taxon>Silurana</taxon>
    </lineage>
</organism>
<keyword id="KW-1185">Reference proteome</keyword>
<keyword id="KW-0687">Ribonucleoprotein</keyword>
<keyword id="KW-0689">Ribosomal protein</keyword>
<comment type="similarity">
    <text evidence="1">Belongs to the eukaryotic ribosomal protein eL22 family.</text>
</comment>
<evidence type="ECO:0000305" key="1"/>
<dbReference type="EMBL" id="BC088059">
    <property type="protein sequence ID" value="AAH88059.1"/>
    <property type="molecule type" value="mRNA"/>
</dbReference>
<dbReference type="RefSeq" id="NP_001011427.1">
    <property type="nucleotide sequence ID" value="NM_001011427.1"/>
</dbReference>
<dbReference type="SMR" id="Q5I0R6"/>
<dbReference type="FunCoup" id="Q5I0R6">
    <property type="interactions" value="1309"/>
</dbReference>
<dbReference type="STRING" id="8364.ENSXETP00000040833"/>
<dbReference type="PaxDb" id="8364-ENSXETP00000020110"/>
<dbReference type="DNASU" id="496910"/>
<dbReference type="GeneID" id="496910"/>
<dbReference type="KEGG" id="xtr:496910"/>
<dbReference type="AGR" id="Xenbase:XB-GENE-6073103"/>
<dbReference type="CTD" id="200916"/>
<dbReference type="Xenbase" id="XB-GENE-6073103">
    <property type="gene designation" value="rpl22l1"/>
</dbReference>
<dbReference type="eggNOG" id="KOG3434">
    <property type="taxonomic scope" value="Eukaryota"/>
</dbReference>
<dbReference type="InParanoid" id="Q5I0R6"/>
<dbReference type="OMA" id="SVNKKHY"/>
<dbReference type="OrthoDB" id="10259820at2759"/>
<dbReference type="Reactome" id="R-XTR-156827">
    <property type="pathway name" value="L13a-mediated translational silencing of Ceruloplasmin expression"/>
</dbReference>
<dbReference type="Reactome" id="R-XTR-1799339">
    <property type="pathway name" value="SRP-dependent cotranslational protein targeting to membrane"/>
</dbReference>
<dbReference type="Reactome" id="R-XTR-6791226">
    <property type="pathway name" value="Major pathway of rRNA processing in the nucleolus and cytosol"/>
</dbReference>
<dbReference type="Reactome" id="R-XTR-72689">
    <property type="pathway name" value="Formation of a pool of free 40S subunits"/>
</dbReference>
<dbReference type="Reactome" id="R-XTR-72706">
    <property type="pathway name" value="GTP hydrolysis and joining of the 60S ribosomal subunit"/>
</dbReference>
<dbReference type="Reactome" id="R-XTR-975956">
    <property type="pathway name" value="Nonsense Mediated Decay (NMD) independent of the Exon Junction Complex (EJC)"/>
</dbReference>
<dbReference type="Reactome" id="R-XTR-975957">
    <property type="pathway name" value="Nonsense Mediated Decay (NMD) enhanced by the Exon Junction Complex (EJC)"/>
</dbReference>
<dbReference type="Proteomes" id="UP000008143">
    <property type="component" value="Chromosome 5"/>
</dbReference>
<dbReference type="Bgee" id="ENSXETG00000038760">
    <property type="expression patterns" value="Expressed in liver and 14 other cell types or tissues"/>
</dbReference>
<dbReference type="GO" id="GO:1990904">
    <property type="term" value="C:ribonucleoprotein complex"/>
    <property type="evidence" value="ECO:0007669"/>
    <property type="project" value="UniProtKB-KW"/>
</dbReference>
<dbReference type="GO" id="GO:0005840">
    <property type="term" value="C:ribosome"/>
    <property type="evidence" value="ECO:0007669"/>
    <property type="project" value="UniProtKB-KW"/>
</dbReference>
<dbReference type="GO" id="GO:0003735">
    <property type="term" value="F:structural constituent of ribosome"/>
    <property type="evidence" value="ECO:0007669"/>
    <property type="project" value="InterPro"/>
</dbReference>
<dbReference type="GO" id="GO:0006412">
    <property type="term" value="P:translation"/>
    <property type="evidence" value="ECO:0007669"/>
    <property type="project" value="InterPro"/>
</dbReference>
<dbReference type="FunFam" id="3.30.1360.210:FF:000001">
    <property type="entry name" value="60S ribosomal protein L22 1"/>
    <property type="match status" value="1"/>
</dbReference>
<dbReference type="Gene3D" id="3.30.1360.210">
    <property type="match status" value="1"/>
</dbReference>
<dbReference type="InterPro" id="IPR002671">
    <property type="entry name" value="Ribosomal_eL22"/>
</dbReference>
<dbReference type="InterPro" id="IPR038526">
    <property type="entry name" value="Ribosomal_eL22_sf"/>
</dbReference>
<dbReference type="PANTHER" id="PTHR10064">
    <property type="entry name" value="60S RIBOSOMAL PROTEIN L22"/>
    <property type="match status" value="1"/>
</dbReference>
<dbReference type="PANTHER" id="PTHR10064:SF1">
    <property type="entry name" value="RIBOSOMAL PROTEIN EL22-LIKE"/>
    <property type="match status" value="1"/>
</dbReference>
<dbReference type="Pfam" id="PF01776">
    <property type="entry name" value="Ribosomal_L22e"/>
    <property type="match status" value="1"/>
</dbReference>
<name>RL22L_XENTR</name>
<feature type="chain" id="PRO_0000240634" description="Ribosomal protein eL22-like 1">
    <location>
        <begin position="1"/>
        <end position="120"/>
    </location>
</feature>
<reference key="1">
    <citation type="submission" date="2004-12" db="EMBL/GenBank/DDBJ databases">
        <authorList>
            <consortium name="NIH - Xenopus Gene Collection (XGC) project"/>
        </authorList>
    </citation>
    <scope>NUCLEOTIDE SEQUENCE [LARGE SCALE MRNA]</scope>
</reference>